<sequence>MRLNTLSPAEGAKHSAKRLGRGIGSGLGKTGGRGHKGQKSRTGGGVRRGFEGGQMPLYRRLPKFGFTSMKSAVTAEVRLNELTKVEGNVVTLETLKAANILTKDIQFAKVILAGEVKSAVTVRGLRVTKGAKAAIEAAGGSIEE</sequence>
<protein>
    <recommendedName>
        <fullName evidence="1">Large ribosomal subunit protein uL15</fullName>
    </recommendedName>
    <alternativeName>
        <fullName evidence="3">50S ribosomal protein L15</fullName>
    </alternativeName>
</protein>
<accession>P44353</accession>
<keyword id="KW-1185">Reference proteome</keyword>
<keyword id="KW-0687">Ribonucleoprotein</keyword>
<keyword id="KW-0689">Ribosomal protein</keyword>
<keyword id="KW-0694">RNA-binding</keyword>
<keyword id="KW-0699">rRNA-binding</keyword>
<proteinExistence type="inferred from homology"/>
<name>RL15_HAEIN</name>
<feature type="chain" id="PRO_0000104730" description="Large ribosomal subunit protein uL15">
    <location>
        <begin position="1"/>
        <end position="144"/>
    </location>
</feature>
<feature type="region of interest" description="Disordered" evidence="2">
    <location>
        <begin position="1"/>
        <end position="53"/>
    </location>
</feature>
<feature type="compositionally biased region" description="Gly residues" evidence="2">
    <location>
        <begin position="21"/>
        <end position="31"/>
    </location>
</feature>
<organism>
    <name type="scientific">Haemophilus influenzae (strain ATCC 51907 / DSM 11121 / KW20 / Rd)</name>
    <dbReference type="NCBI Taxonomy" id="71421"/>
    <lineage>
        <taxon>Bacteria</taxon>
        <taxon>Pseudomonadati</taxon>
        <taxon>Pseudomonadota</taxon>
        <taxon>Gammaproteobacteria</taxon>
        <taxon>Pasteurellales</taxon>
        <taxon>Pasteurellaceae</taxon>
        <taxon>Haemophilus</taxon>
    </lineage>
</organism>
<reference key="1">
    <citation type="journal article" date="1995" name="Science">
        <title>Whole-genome random sequencing and assembly of Haemophilus influenzae Rd.</title>
        <authorList>
            <person name="Fleischmann R.D."/>
            <person name="Adams M.D."/>
            <person name="White O."/>
            <person name="Clayton R.A."/>
            <person name="Kirkness E.F."/>
            <person name="Kerlavage A.R."/>
            <person name="Bult C.J."/>
            <person name="Tomb J.-F."/>
            <person name="Dougherty B.A."/>
            <person name="Merrick J.M."/>
            <person name="McKenney K."/>
            <person name="Sutton G.G."/>
            <person name="FitzHugh W."/>
            <person name="Fields C.A."/>
            <person name="Gocayne J.D."/>
            <person name="Scott J.D."/>
            <person name="Shirley R."/>
            <person name="Liu L.-I."/>
            <person name="Glodek A."/>
            <person name="Kelley J.M."/>
            <person name="Weidman J.F."/>
            <person name="Phillips C.A."/>
            <person name="Spriggs T."/>
            <person name="Hedblom E."/>
            <person name="Cotton M.D."/>
            <person name="Utterback T.R."/>
            <person name="Hanna M.C."/>
            <person name="Nguyen D.T."/>
            <person name="Saudek D.M."/>
            <person name="Brandon R.C."/>
            <person name="Fine L.D."/>
            <person name="Fritchman J.L."/>
            <person name="Fuhrmann J.L."/>
            <person name="Geoghagen N.S.M."/>
            <person name="Gnehm C.L."/>
            <person name="McDonald L.A."/>
            <person name="Small K.V."/>
            <person name="Fraser C.M."/>
            <person name="Smith H.O."/>
            <person name="Venter J.C."/>
        </authorList>
    </citation>
    <scope>NUCLEOTIDE SEQUENCE [LARGE SCALE GENOMIC DNA]</scope>
    <source>
        <strain>ATCC 51907 / DSM 11121 / KW20 / Rd</strain>
    </source>
</reference>
<evidence type="ECO:0000255" key="1">
    <source>
        <dbReference type="HAMAP-Rule" id="MF_01341"/>
    </source>
</evidence>
<evidence type="ECO:0000256" key="2">
    <source>
        <dbReference type="SAM" id="MobiDB-lite"/>
    </source>
</evidence>
<evidence type="ECO:0000305" key="3"/>
<gene>
    <name evidence="1" type="primary">rplO</name>
    <name type="synonym">rpl15</name>
    <name type="ordered locus">HI_0797</name>
</gene>
<comment type="function">
    <text evidence="1">Binds to the 23S rRNA.</text>
</comment>
<comment type="subunit">
    <text evidence="1">Part of the 50S ribosomal subunit.</text>
</comment>
<comment type="similarity">
    <text evidence="1">Belongs to the universal ribosomal protein uL15 family.</text>
</comment>
<dbReference type="EMBL" id="L42023">
    <property type="protein sequence ID" value="AAC22455.1"/>
    <property type="molecule type" value="Genomic_DNA"/>
</dbReference>
<dbReference type="PIR" id="F64094">
    <property type="entry name" value="F64094"/>
</dbReference>
<dbReference type="RefSeq" id="NP_438956.1">
    <property type="nucleotide sequence ID" value="NC_000907.1"/>
</dbReference>
<dbReference type="SMR" id="P44353"/>
<dbReference type="STRING" id="71421.HI_0797"/>
<dbReference type="EnsemblBacteria" id="AAC22455">
    <property type="protein sequence ID" value="AAC22455"/>
    <property type="gene ID" value="HI_0797"/>
</dbReference>
<dbReference type="KEGG" id="hin:HI_0797"/>
<dbReference type="PATRIC" id="fig|71421.8.peg.836"/>
<dbReference type="eggNOG" id="COG0200">
    <property type="taxonomic scope" value="Bacteria"/>
</dbReference>
<dbReference type="HOGENOM" id="CLU_055188_4_2_6"/>
<dbReference type="OrthoDB" id="9810293at2"/>
<dbReference type="PhylomeDB" id="P44353"/>
<dbReference type="BioCyc" id="HINF71421:G1GJ1-837-MONOMER"/>
<dbReference type="Proteomes" id="UP000000579">
    <property type="component" value="Chromosome"/>
</dbReference>
<dbReference type="GO" id="GO:0022625">
    <property type="term" value="C:cytosolic large ribosomal subunit"/>
    <property type="evidence" value="ECO:0000318"/>
    <property type="project" value="GO_Central"/>
</dbReference>
<dbReference type="GO" id="GO:0019843">
    <property type="term" value="F:rRNA binding"/>
    <property type="evidence" value="ECO:0007669"/>
    <property type="project" value="UniProtKB-UniRule"/>
</dbReference>
<dbReference type="GO" id="GO:0003735">
    <property type="term" value="F:structural constituent of ribosome"/>
    <property type="evidence" value="ECO:0000318"/>
    <property type="project" value="GO_Central"/>
</dbReference>
<dbReference type="GO" id="GO:0006412">
    <property type="term" value="P:translation"/>
    <property type="evidence" value="ECO:0007669"/>
    <property type="project" value="UniProtKB-UniRule"/>
</dbReference>
<dbReference type="FunFam" id="3.100.10.10:FF:000003">
    <property type="entry name" value="50S ribosomal protein L15"/>
    <property type="match status" value="1"/>
</dbReference>
<dbReference type="Gene3D" id="3.100.10.10">
    <property type="match status" value="1"/>
</dbReference>
<dbReference type="HAMAP" id="MF_01341">
    <property type="entry name" value="Ribosomal_uL15"/>
    <property type="match status" value="1"/>
</dbReference>
<dbReference type="InterPro" id="IPR030878">
    <property type="entry name" value="Ribosomal_uL15"/>
</dbReference>
<dbReference type="InterPro" id="IPR021131">
    <property type="entry name" value="Ribosomal_uL15/eL18"/>
</dbReference>
<dbReference type="InterPro" id="IPR036227">
    <property type="entry name" value="Ribosomal_uL15/eL18_sf"/>
</dbReference>
<dbReference type="InterPro" id="IPR005749">
    <property type="entry name" value="Ribosomal_uL15_bac-type"/>
</dbReference>
<dbReference type="InterPro" id="IPR001196">
    <property type="entry name" value="Ribosomal_uL15_CS"/>
</dbReference>
<dbReference type="NCBIfam" id="TIGR01071">
    <property type="entry name" value="rplO_bact"/>
    <property type="match status" value="1"/>
</dbReference>
<dbReference type="PANTHER" id="PTHR12934">
    <property type="entry name" value="50S RIBOSOMAL PROTEIN L15"/>
    <property type="match status" value="1"/>
</dbReference>
<dbReference type="PANTHER" id="PTHR12934:SF11">
    <property type="entry name" value="LARGE RIBOSOMAL SUBUNIT PROTEIN UL15M"/>
    <property type="match status" value="1"/>
</dbReference>
<dbReference type="Pfam" id="PF00828">
    <property type="entry name" value="Ribosomal_L27A"/>
    <property type="match status" value="1"/>
</dbReference>
<dbReference type="SUPFAM" id="SSF52080">
    <property type="entry name" value="Ribosomal proteins L15p and L18e"/>
    <property type="match status" value="1"/>
</dbReference>
<dbReference type="PROSITE" id="PS00475">
    <property type="entry name" value="RIBOSOMAL_L15"/>
    <property type="match status" value="1"/>
</dbReference>